<evidence type="ECO:0000255" key="1">
    <source>
        <dbReference type="HAMAP-Rule" id="MF_00064"/>
    </source>
</evidence>
<comment type="function">
    <text evidence="1">With CysN forms the ATP sulfurylase (ATPS) that catalyzes the adenylation of sulfate producing adenosine 5'-phosphosulfate (APS) and diphosphate, the first enzymatic step in sulfur assimilation pathway. APS synthesis involves the formation of a high-energy phosphoric-sulfuric acid anhydride bond driven by GTP hydrolysis by CysN coupled to ATP hydrolysis by CysD.</text>
</comment>
<comment type="catalytic activity">
    <reaction evidence="1">
        <text>sulfate + ATP + H(+) = adenosine 5'-phosphosulfate + diphosphate</text>
        <dbReference type="Rhea" id="RHEA:18133"/>
        <dbReference type="ChEBI" id="CHEBI:15378"/>
        <dbReference type="ChEBI" id="CHEBI:16189"/>
        <dbReference type="ChEBI" id="CHEBI:30616"/>
        <dbReference type="ChEBI" id="CHEBI:33019"/>
        <dbReference type="ChEBI" id="CHEBI:58243"/>
        <dbReference type="EC" id="2.7.7.4"/>
    </reaction>
</comment>
<comment type="pathway">
    <text evidence="1">Sulfur metabolism; hydrogen sulfide biosynthesis; sulfite from sulfate: step 1/3.</text>
</comment>
<comment type="subunit">
    <text evidence="1">Heterodimer composed of CysD, the smaller subunit, and CysN.</text>
</comment>
<comment type="similarity">
    <text evidence="1">Belongs to the PAPS reductase family. CysD subfamily.</text>
</comment>
<gene>
    <name evidence="1" type="primary">cysD</name>
    <name type="ordered locus">YPTB0765</name>
</gene>
<sequence length="302" mass="35187">MDEKRLTHLRQLEAESIHIIREVAAEFGNPVMLYSIGKDSSVMLHLARKAFFPGHLPFPLLHVDTGWKFREMYEFRDHTVKEFGCELLVHRNPEGVAMGINPFVHGSAKHTDIMKTEGLKQALNKYGFDAAFGGARRDEEKSRAKERIYSFRDRFHRWDPKNQRPELWHNYNGQINKGESIRVFPLSNWTELDIWQYIFLEKIEIVPLYLAKPRPVVERDGMLLMVDDDRIDLQPGEVIVQKKVRFRTLGCWPLTGAVESEAETLPAIIEEMLISTTSERQGRMIDRDQSGSMELKKRQGYF</sequence>
<accession>Q66EC8</accession>
<proteinExistence type="inferred from homology"/>
<dbReference type="EC" id="2.7.7.4" evidence="1"/>
<dbReference type="EMBL" id="BX936398">
    <property type="protein sequence ID" value="CAH20005.1"/>
    <property type="molecule type" value="Genomic_DNA"/>
</dbReference>
<dbReference type="RefSeq" id="WP_002209386.1">
    <property type="nucleotide sequence ID" value="NZ_CP009712.1"/>
</dbReference>
<dbReference type="SMR" id="Q66EC8"/>
<dbReference type="GeneID" id="57975343"/>
<dbReference type="KEGG" id="ypo:BZ17_1791"/>
<dbReference type="KEGG" id="yps:YPTB0765"/>
<dbReference type="PATRIC" id="fig|273123.14.peg.1896"/>
<dbReference type="UniPathway" id="UPA00140">
    <property type="reaction ID" value="UER00204"/>
</dbReference>
<dbReference type="Proteomes" id="UP000001011">
    <property type="component" value="Chromosome"/>
</dbReference>
<dbReference type="GO" id="GO:0005524">
    <property type="term" value="F:ATP binding"/>
    <property type="evidence" value="ECO:0007669"/>
    <property type="project" value="UniProtKB-KW"/>
</dbReference>
<dbReference type="GO" id="GO:0004781">
    <property type="term" value="F:sulfate adenylyltransferase (ATP) activity"/>
    <property type="evidence" value="ECO:0007669"/>
    <property type="project" value="UniProtKB-UniRule"/>
</dbReference>
<dbReference type="GO" id="GO:0070814">
    <property type="term" value="P:hydrogen sulfide biosynthetic process"/>
    <property type="evidence" value="ECO:0007669"/>
    <property type="project" value="UniProtKB-UniRule"/>
</dbReference>
<dbReference type="GO" id="GO:0000103">
    <property type="term" value="P:sulfate assimilation"/>
    <property type="evidence" value="ECO:0007669"/>
    <property type="project" value="UniProtKB-UniRule"/>
</dbReference>
<dbReference type="CDD" id="cd23946">
    <property type="entry name" value="Sulfate_adenylyltransferase_2"/>
    <property type="match status" value="1"/>
</dbReference>
<dbReference type="FunFam" id="3.40.50.620:FF:000002">
    <property type="entry name" value="Sulfate adenylyltransferase subunit 2"/>
    <property type="match status" value="1"/>
</dbReference>
<dbReference type="Gene3D" id="3.40.50.620">
    <property type="entry name" value="HUPs"/>
    <property type="match status" value="1"/>
</dbReference>
<dbReference type="HAMAP" id="MF_00064">
    <property type="entry name" value="Sulf_adenylyltr_sub2"/>
    <property type="match status" value="1"/>
</dbReference>
<dbReference type="InterPro" id="IPR002500">
    <property type="entry name" value="PAPS_reduct_dom"/>
</dbReference>
<dbReference type="InterPro" id="IPR014729">
    <property type="entry name" value="Rossmann-like_a/b/a_fold"/>
</dbReference>
<dbReference type="InterPro" id="IPR011784">
    <property type="entry name" value="SO4_adenylTrfase_ssu"/>
</dbReference>
<dbReference type="InterPro" id="IPR050128">
    <property type="entry name" value="Sulfate_adenylyltrnsfr_sub2"/>
</dbReference>
<dbReference type="NCBIfam" id="TIGR02039">
    <property type="entry name" value="CysD"/>
    <property type="match status" value="1"/>
</dbReference>
<dbReference type="NCBIfam" id="NF003587">
    <property type="entry name" value="PRK05253.1"/>
    <property type="match status" value="1"/>
</dbReference>
<dbReference type="NCBIfam" id="NF009214">
    <property type="entry name" value="PRK12563.1"/>
    <property type="match status" value="1"/>
</dbReference>
<dbReference type="PANTHER" id="PTHR43196">
    <property type="entry name" value="SULFATE ADENYLYLTRANSFERASE SUBUNIT 2"/>
    <property type="match status" value="1"/>
</dbReference>
<dbReference type="PANTHER" id="PTHR43196:SF1">
    <property type="entry name" value="SULFATE ADENYLYLTRANSFERASE SUBUNIT 2"/>
    <property type="match status" value="1"/>
</dbReference>
<dbReference type="Pfam" id="PF01507">
    <property type="entry name" value="PAPS_reduct"/>
    <property type="match status" value="1"/>
</dbReference>
<dbReference type="PIRSF" id="PIRSF002936">
    <property type="entry name" value="CysDAde_trans"/>
    <property type="match status" value="1"/>
</dbReference>
<dbReference type="SUPFAM" id="SSF52402">
    <property type="entry name" value="Adenine nucleotide alpha hydrolases-like"/>
    <property type="match status" value="1"/>
</dbReference>
<organism>
    <name type="scientific">Yersinia pseudotuberculosis serotype I (strain IP32953)</name>
    <dbReference type="NCBI Taxonomy" id="273123"/>
    <lineage>
        <taxon>Bacteria</taxon>
        <taxon>Pseudomonadati</taxon>
        <taxon>Pseudomonadota</taxon>
        <taxon>Gammaproteobacteria</taxon>
        <taxon>Enterobacterales</taxon>
        <taxon>Yersiniaceae</taxon>
        <taxon>Yersinia</taxon>
    </lineage>
</organism>
<protein>
    <recommendedName>
        <fullName evidence="1">Sulfate adenylyltransferase subunit 2</fullName>
        <ecNumber evidence="1">2.7.7.4</ecNumber>
    </recommendedName>
    <alternativeName>
        <fullName evidence="1">ATP-sulfurylase small subunit</fullName>
    </alternativeName>
    <alternativeName>
        <fullName evidence="1">Sulfate adenylate transferase</fullName>
        <shortName evidence="1">SAT</shortName>
    </alternativeName>
</protein>
<reference key="1">
    <citation type="journal article" date="2004" name="Proc. Natl. Acad. Sci. U.S.A.">
        <title>Insights into the evolution of Yersinia pestis through whole-genome comparison with Yersinia pseudotuberculosis.</title>
        <authorList>
            <person name="Chain P.S.G."/>
            <person name="Carniel E."/>
            <person name="Larimer F.W."/>
            <person name="Lamerdin J."/>
            <person name="Stoutland P.O."/>
            <person name="Regala W.M."/>
            <person name="Georgescu A.M."/>
            <person name="Vergez L.M."/>
            <person name="Land M.L."/>
            <person name="Motin V.L."/>
            <person name="Brubaker R.R."/>
            <person name="Fowler J."/>
            <person name="Hinnebusch J."/>
            <person name="Marceau M."/>
            <person name="Medigue C."/>
            <person name="Simonet M."/>
            <person name="Chenal-Francisque V."/>
            <person name="Souza B."/>
            <person name="Dacheux D."/>
            <person name="Elliott J.M."/>
            <person name="Derbise A."/>
            <person name="Hauser L.J."/>
            <person name="Garcia E."/>
        </authorList>
    </citation>
    <scope>NUCLEOTIDE SEQUENCE [LARGE SCALE GENOMIC DNA]</scope>
    <source>
        <strain>IP32953</strain>
    </source>
</reference>
<feature type="chain" id="PRO_1000009004" description="Sulfate adenylyltransferase subunit 2">
    <location>
        <begin position="1"/>
        <end position="302"/>
    </location>
</feature>
<keyword id="KW-0067">ATP-binding</keyword>
<keyword id="KW-0547">Nucleotide-binding</keyword>
<keyword id="KW-0548">Nucleotidyltransferase</keyword>
<keyword id="KW-0808">Transferase</keyword>
<name>CYSD_YERPS</name>